<gene>
    <name type="primary">Defb9</name>
</gene>
<proteinExistence type="evidence at transcript level"/>
<protein>
    <recommendedName>
        <fullName>Beta-defensin 9</fullName>
        <shortName>BD-9</shortName>
        <shortName>mBD-9</shortName>
    </recommendedName>
    <alternativeName>
        <fullName>Defensin, beta 9</fullName>
    </alternativeName>
</protein>
<feature type="signal peptide" evidence="2">
    <location>
        <begin position="1"/>
        <end position="24"/>
    </location>
</feature>
<feature type="chain" id="PRO_0000006937" description="Beta-defensin 9">
    <location>
        <begin position="25"/>
        <end position="67"/>
    </location>
</feature>
<feature type="disulfide bond" evidence="1">
    <location>
        <begin position="34"/>
        <end position="62"/>
    </location>
</feature>
<feature type="disulfide bond" evidence="1">
    <location>
        <begin position="41"/>
        <end position="55"/>
    </location>
</feature>
<feature type="disulfide bond" evidence="1">
    <location>
        <begin position="45"/>
        <end position="63"/>
    </location>
</feature>
<accession>Q8R2I6</accession>
<reference key="1">
    <citation type="journal article" date="2003" name="Mol. Biol. Evol.">
        <title>Signal sequence conservation and mature peptide divergence within subgroups of the murine beta-defensin gene family.</title>
        <authorList>
            <person name="Morrison G.M."/>
            <person name="Semple C.A.M."/>
            <person name="Kilanowski F.M."/>
            <person name="Hill R.E."/>
            <person name="Dorin J.R."/>
        </authorList>
    </citation>
    <scope>NUCLEOTIDE SEQUENCE [MRNA]</scope>
    <scope>TISSUE SPECIFICITY</scope>
    <source>
        <strain>C57BL/6N</strain>
        <tissue>Testis</tissue>
    </source>
</reference>
<dbReference type="EMBL" id="AJ437647">
    <property type="protein sequence ID" value="CAD26896.1"/>
    <property type="molecule type" value="mRNA"/>
</dbReference>
<dbReference type="CCDS" id="CCDS40286.1"/>
<dbReference type="RefSeq" id="NP_631965.1">
    <property type="nucleotide sequence ID" value="NM_139219.3"/>
</dbReference>
<dbReference type="SMR" id="Q8R2I6"/>
<dbReference type="FunCoup" id="Q8R2I6">
    <property type="interactions" value="33"/>
</dbReference>
<dbReference type="STRING" id="10090.ENSMUSP00000054085"/>
<dbReference type="PaxDb" id="10090-ENSMUSP00000054085"/>
<dbReference type="DNASU" id="246079"/>
<dbReference type="Ensembl" id="ENSMUST00000057076.5">
    <property type="protein sequence ID" value="ENSMUSP00000054085.5"/>
    <property type="gene ID" value="ENSMUSG00000047390.7"/>
</dbReference>
<dbReference type="GeneID" id="246079"/>
<dbReference type="KEGG" id="mmu:246079"/>
<dbReference type="UCSC" id="uc009lcc.2">
    <property type="organism name" value="mouse"/>
</dbReference>
<dbReference type="AGR" id="MGI:2179198"/>
<dbReference type="CTD" id="246079"/>
<dbReference type="MGI" id="MGI:2179198">
    <property type="gene designation" value="Defb9"/>
</dbReference>
<dbReference type="VEuPathDB" id="HostDB:ENSMUSG00000047390"/>
<dbReference type="GeneTree" id="ENSGT01130000280476"/>
<dbReference type="HOGENOM" id="CLU_189296_1_0_1"/>
<dbReference type="InParanoid" id="Q8R2I6"/>
<dbReference type="OMA" id="VSEMERC"/>
<dbReference type="OrthoDB" id="9599070at2759"/>
<dbReference type="PhylomeDB" id="Q8R2I6"/>
<dbReference type="BioGRID-ORCS" id="246079">
    <property type="hits" value="0 hits in 75 CRISPR screens"/>
</dbReference>
<dbReference type="ChiTaRS" id="Defb9">
    <property type="organism name" value="mouse"/>
</dbReference>
<dbReference type="PRO" id="PR:Q8R2I6"/>
<dbReference type="Proteomes" id="UP000000589">
    <property type="component" value="Chromosome 8"/>
</dbReference>
<dbReference type="RNAct" id="Q8R2I6">
    <property type="molecule type" value="protein"/>
</dbReference>
<dbReference type="Bgee" id="ENSMUSG00000047390">
    <property type="expression patterns" value="Expressed in ciliary body and 29 other cell types or tissues"/>
</dbReference>
<dbReference type="ExpressionAtlas" id="Q8R2I6">
    <property type="expression patterns" value="baseline and differential"/>
</dbReference>
<dbReference type="GO" id="GO:0005576">
    <property type="term" value="C:extracellular region"/>
    <property type="evidence" value="ECO:0007669"/>
    <property type="project" value="UniProtKB-SubCell"/>
</dbReference>
<dbReference type="GO" id="GO:0042742">
    <property type="term" value="P:defense response to bacterium"/>
    <property type="evidence" value="ECO:0007669"/>
    <property type="project" value="UniProtKB-KW"/>
</dbReference>
<dbReference type="Gene3D" id="3.10.360.10">
    <property type="entry name" value="Antimicrobial Peptide, Beta-defensin 2, Chain A"/>
    <property type="match status" value="1"/>
</dbReference>
<dbReference type="InterPro" id="IPR001855">
    <property type="entry name" value="Defensin_beta-like"/>
</dbReference>
<dbReference type="PANTHER" id="PTHR21388:SF4">
    <property type="entry name" value="BETA-DEFENSIN 10-RELATED"/>
    <property type="match status" value="1"/>
</dbReference>
<dbReference type="PANTHER" id="PTHR21388">
    <property type="entry name" value="BETA-DEFENSIN-RELATED"/>
    <property type="match status" value="1"/>
</dbReference>
<dbReference type="Pfam" id="PF00711">
    <property type="entry name" value="Defensin_beta"/>
    <property type="match status" value="1"/>
</dbReference>
<dbReference type="SUPFAM" id="SSF57392">
    <property type="entry name" value="Defensin-like"/>
    <property type="match status" value="1"/>
</dbReference>
<evidence type="ECO:0000250" key="1"/>
<evidence type="ECO:0000255" key="2"/>
<evidence type="ECO:0000269" key="3">
    <source>
    </source>
</evidence>
<evidence type="ECO:0000305" key="4"/>
<keyword id="KW-0044">Antibiotic</keyword>
<keyword id="KW-0929">Antimicrobial</keyword>
<keyword id="KW-0211">Defensin</keyword>
<keyword id="KW-1015">Disulfide bond</keyword>
<keyword id="KW-1185">Reference proteome</keyword>
<keyword id="KW-0964">Secreted</keyword>
<keyword id="KW-0732">Signal</keyword>
<comment type="function">
    <text evidence="1">Has antibacterial activity.</text>
</comment>
<comment type="subcellular location">
    <subcellularLocation>
        <location evidence="1">Secreted</location>
    </subcellularLocation>
</comment>
<comment type="tissue specificity">
    <text evidence="3">Weakly expressed in adult and neonatal brain.</text>
</comment>
<comment type="similarity">
    <text evidence="4">Belongs to the beta-defensin family.</text>
</comment>
<name>DEFB9_MOUSE</name>
<sequence>MRTLCSLLLICCLLFSYTTPAANSIIGVSEMERCHKKGGYCYFYCFSSHKKIGSCFPEWPRCCKNIK</sequence>
<organism>
    <name type="scientific">Mus musculus</name>
    <name type="common">Mouse</name>
    <dbReference type="NCBI Taxonomy" id="10090"/>
    <lineage>
        <taxon>Eukaryota</taxon>
        <taxon>Metazoa</taxon>
        <taxon>Chordata</taxon>
        <taxon>Craniata</taxon>
        <taxon>Vertebrata</taxon>
        <taxon>Euteleostomi</taxon>
        <taxon>Mammalia</taxon>
        <taxon>Eutheria</taxon>
        <taxon>Euarchontoglires</taxon>
        <taxon>Glires</taxon>
        <taxon>Rodentia</taxon>
        <taxon>Myomorpha</taxon>
        <taxon>Muroidea</taxon>
        <taxon>Muridae</taxon>
        <taxon>Murinae</taxon>
        <taxon>Mus</taxon>
        <taxon>Mus</taxon>
    </lineage>
</organism>